<sequence length="157" mass="18457">MLRQLNLTREISRWIFMPWQRGAAGTASAEPPALPINDVIVDYDGPDLPLPEYPQRPNEPLEIRKQRLVYQSRKRGMLENDLLLSTFAAKYLKNFNEEQTAIYDQLINGVSNDWDIYYWATDVKTTPAEYNTEIMQLLKEHVKNTERVQRFRQPDLT</sequence>
<comment type="function">
    <text evidence="1">Plays an essential role in the assembly of succinate dehydrogenase (SDH), an enzyme complex (also referred to as respiratory complex II) that is a component of both the tricarboxylic acid (TCA) cycle and the mitochondrial electron transport chain, and which couples the oxidation of succinate to fumarate with the reduction of ubiquinone (coenzyme Q) to ubiquinol. Required for flavinylation (covalent attachment of FAD) of the flavoprotein subunit of the SDH catalytic dimer.</text>
</comment>
<comment type="subunit">
    <text evidence="1">Interacts with the flavoprotein subunit within the SDH catalytic dimer.</text>
</comment>
<comment type="subcellular location">
    <subcellularLocation>
        <location evidence="1">Mitochondrion matrix</location>
    </subcellularLocation>
</comment>
<comment type="miscellaneous">
    <text evidence="1">This protein may be expected to contain an N-terminal transit peptide but none has been predicted.</text>
</comment>
<comment type="similarity">
    <text evidence="1">Belongs to the SDHAF2 family.</text>
</comment>
<proteinExistence type="inferred from homology"/>
<feature type="chain" id="PRO_0000383180" description="Succinate dehydrogenase assembly factor 2-A, mitochondrial">
    <location>
        <begin position="1"/>
        <end position="157"/>
    </location>
</feature>
<keyword id="KW-0143">Chaperone</keyword>
<keyword id="KW-0496">Mitochondrion</keyword>
<keyword id="KW-1185">Reference proteome</keyword>
<protein>
    <recommendedName>
        <fullName evidence="1">Succinate dehydrogenase assembly factor 2-A, mitochondrial</fullName>
        <shortName evidence="1">SDH assembly factor 2-A</shortName>
        <shortName evidence="1">SDHAF2-A</shortName>
    </recommendedName>
</protein>
<evidence type="ECO:0000255" key="1">
    <source>
        <dbReference type="HAMAP-Rule" id="MF_03057"/>
    </source>
</evidence>
<organism>
    <name type="scientific">Drosophila willistoni</name>
    <name type="common">Fruit fly</name>
    <dbReference type="NCBI Taxonomy" id="7260"/>
    <lineage>
        <taxon>Eukaryota</taxon>
        <taxon>Metazoa</taxon>
        <taxon>Ecdysozoa</taxon>
        <taxon>Arthropoda</taxon>
        <taxon>Hexapoda</taxon>
        <taxon>Insecta</taxon>
        <taxon>Pterygota</taxon>
        <taxon>Neoptera</taxon>
        <taxon>Endopterygota</taxon>
        <taxon>Diptera</taxon>
        <taxon>Brachycera</taxon>
        <taxon>Muscomorpha</taxon>
        <taxon>Ephydroidea</taxon>
        <taxon>Drosophilidae</taxon>
        <taxon>Drosophila</taxon>
        <taxon>Sophophora</taxon>
    </lineage>
</organism>
<name>SDF2A_DROWI</name>
<reference key="1">
    <citation type="journal article" date="2007" name="Nature">
        <title>Evolution of genes and genomes on the Drosophila phylogeny.</title>
        <authorList>
            <consortium name="Drosophila 12 genomes consortium"/>
        </authorList>
    </citation>
    <scope>NUCLEOTIDE SEQUENCE [LARGE SCALE GENOMIC DNA]</scope>
    <source>
        <strain>Tucson 14030-0811.24</strain>
    </source>
</reference>
<dbReference type="EMBL" id="CH963850">
    <property type="protein sequence ID" value="EDW74686.1"/>
    <property type="molecule type" value="Genomic_DNA"/>
</dbReference>
<dbReference type="SMR" id="B4MRE7"/>
<dbReference type="STRING" id="7260.B4MRE7"/>
<dbReference type="EnsemblMetazoa" id="FBtr0246424">
    <property type="protein sequence ID" value="FBpp0244916"/>
    <property type="gene ID" value="FBgn0217776"/>
</dbReference>
<dbReference type="EnsemblMetazoa" id="XM_002063664.4">
    <property type="protein sequence ID" value="XP_002063700.1"/>
    <property type="gene ID" value="LOC6641050"/>
</dbReference>
<dbReference type="GeneID" id="6641050"/>
<dbReference type="KEGG" id="dwi:6641050"/>
<dbReference type="eggNOG" id="KOG3326">
    <property type="taxonomic scope" value="Eukaryota"/>
</dbReference>
<dbReference type="HOGENOM" id="CLU_103054_0_3_1"/>
<dbReference type="OMA" id="TFAGKYL"/>
<dbReference type="OrthoDB" id="284292at2759"/>
<dbReference type="PhylomeDB" id="B4MRE7"/>
<dbReference type="Proteomes" id="UP000007798">
    <property type="component" value="Unassembled WGS sequence"/>
</dbReference>
<dbReference type="GO" id="GO:0005759">
    <property type="term" value="C:mitochondrial matrix"/>
    <property type="evidence" value="ECO:0007669"/>
    <property type="project" value="UniProtKB-SubCell"/>
</dbReference>
<dbReference type="GO" id="GO:0005739">
    <property type="term" value="C:mitochondrion"/>
    <property type="evidence" value="ECO:0000250"/>
    <property type="project" value="UniProtKB"/>
</dbReference>
<dbReference type="GO" id="GO:0055070">
    <property type="term" value="P:copper ion homeostasis"/>
    <property type="evidence" value="ECO:0007669"/>
    <property type="project" value="EnsemblMetazoa"/>
</dbReference>
<dbReference type="GO" id="GO:0006121">
    <property type="term" value="P:mitochondrial electron transport, succinate to ubiquinone"/>
    <property type="evidence" value="ECO:0000250"/>
    <property type="project" value="UniProtKB"/>
</dbReference>
<dbReference type="GO" id="GO:0034553">
    <property type="term" value="P:mitochondrial respiratory chain complex II assembly"/>
    <property type="evidence" value="ECO:0007669"/>
    <property type="project" value="TreeGrafter"/>
</dbReference>
<dbReference type="GO" id="GO:0018293">
    <property type="term" value="P:protein-FAD linkage"/>
    <property type="evidence" value="ECO:0000250"/>
    <property type="project" value="UniProtKB"/>
</dbReference>
<dbReference type="GO" id="GO:0006099">
    <property type="term" value="P:tricarboxylic acid cycle"/>
    <property type="evidence" value="ECO:0007669"/>
    <property type="project" value="TreeGrafter"/>
</dbReference>
<dbReference type="FunFam" id="1.10.150.250:FF:000002">
    <property type="entry name" value="Succinate dehydrogenase assembly factor 2, mitochondrial"/>
    <property type="match status" value="1"/>
</dbReference>
<dbReference type="Gene3D" id="1.10.150.250">
    <property type="entry name" value="Flavinator of succinate dehydrogenase"/>
    <property type="match status" value="1"/>
</dbReference>
<dbReference type="HAMAP" id="MF_03057">
    <property type="entry name" value="SDHAF2"/>
    <property type="match status" value="1"/>
</dbReference>
<dbReference type="InterPro" id="IPR005631">
    <property type="entry name" value="SDH"/>
</dbReference>
<dbReference type="InterPro" id="IPR036714">
    <property type="entry name" value="SDH_sf"/>
</dbReference>
<dbReference type="InterPro" id="IPR028882">
    <property type="entry name" value="SDHAF2"/>
</dbReference>
<dbReference type="PANTHER" id="PTHR12469">
    <property type="entry name" value="PROTEIN EMI5 HOMOLOG, MITOCHONDRIAL"/>
    <property type="match status" value="1"/>
</dbReference>
<dbReference type="PANTHER" id="PTHR12469:SF2">
    <property type="entry name" value="SUCCINATE DEHYDROGENASE ASSEMBLY FACTOR 2, MITOCHONDRIAL"/>
    <property type="match status" value="1"/>
</dbReference>
<dbReference type="Pfam" id="PF03937">
    <property type="entry name" value="Sdh5"/>
    <property type="match status" value="1"/>
</dbReference>
<dbReference type="SUPFAM" id="SSF109910">
    <property type="entry name" value="YgfY-like"/>
    <property type="match status" value="1"/>
</dbReference>
<gene>
    <name type="ORF">GK15773</name>
</gene>
<accession>B4MRE7</accession>